<name>PCR5_ARATH</name>
<reference key="1">
    <citation type="journal article" date="2000" name="DNA Res.">
        <title>Structural analysis of Arabidopsis thaliana chromosome 3. I. Sequence features of the regions of 4,504,864 bp covered by sixty P1 and TAC clones.</title>
        <authorList>
            <person name="Sato S."/>
            <person name="Nakamura Y."/>
            <person name="Kaneko T."/>
            <person name="Katoh T."/>
            <person name="Asamizu E."/>
            <person name="Tabata S."/>
        </authorList>
    </citation>
    <scope>NUCLEOTIDE SEQUENCE [LARGE SCALE GENOMIC DNA]</scope>
    <source>
        <strain>cv. Columbia</strain>
    </source>
</reference>
<reference key="2">
    <citation type="journal article" date="2017" name="Plant J.">
        <title>Araport11: a complete reannotation of the Arabidopsis thaliana reference genome.</title>
        <authorList>
            <person name="Cheng C.Y."/>
            <person name="Krishnakumar V."/>
            <person name="Chan A.P."/>
            <person name="Thibaud-Nissen F."/>
            <person name="Schobel S."/>
            <person name="Town C.D."/>
        </authorList>
    </citation>
    <scope>GENOME REANNOTATION</scope>
    <source>
        <strain>cv. Columbia</strain>
    </source>
</reference>
<reference key="3">
    <citation type="submission" date="2004-01" db="EMBL/GenBank/DDBJ databases">
        <title>Arabidopsis ORF clones.</title>
        <authorList>
            <person name="Cheuk R."/>
            <person name="Chen H."/>
            <person name="Kim C.J."/>
            <person name="Shinn P."/>
            <person name="Ecker J.R."/>
        </authorList>
    </citation>
    <scope>NUCLEOTIDE SEQUENCE [LARGE SCALE MRNA]</scope>
    <source>
        <strain>cv. Columbia</strain>
    </source>
</reference>
<reference key="4">
    <citation type="journal article" date="2004" name="Plant Physiol.">
        <title>A novel family of cys-rich membrane proteins mediates cadmium resistance in Arabidopsis.</title>
        <authorList>
            <person name="Song W.Y."/>
            <person name="Martinoia E."/>
            <person name="Lee J."/>
            <person name="Kim D."/>
            <person name="Kim D.Y."/>
            <person name="Vogt E."/>
            <person name="Shim D."/>
            <person name="Choi K.S."/>
            <person name="Hwang I."/>
            <person name="Lee Y."/>
        </authorList>
    </citation>
    <scope>GENE FAMILY</scope>
    <scope>NOMENCLATURE</scope>
</reference>
<feature type="chain" id="PRO_0000407721" description="Protein PLANT CADMIUM RESISTANCE 5">
    <location>
        <begin position="1"/>
        <end position="184"/>
    </location>
</feature>
<feature type="transmembrane region" description="Helical" evidence="2">
    <location>
        <begin position="94"/>
        <end position="114"/>
    </location>
</feature>
<feature type="region of interest" description="Disordered" evidence="3">
    <location>
        <begin position="1"/>
        <end position="33"/>
    </location>
</feature>
<feature type="compositionally biased region" description="Polar residues" evidence="3">
    <location>
        <begin position="1"/>
        <end position="26"/>
    </location>
</feature>
<organism>
    <name type="scientific">Arabidopsis thaliana</name>
    <name type="common">Mouse-ear cress</name>
    <dbReference type="NCBI Taxonomy" id="3702"/>
    <lineage>
        <taxon>Eukaryota</taxon>
        <taxon>Viridiplantae</taxon>
        <taxon>Streptophyta</taxon>
        <taxon>Embryophyta</taxon>
        <taxon>Tracheophyta</taxon>
        <taxon>Spermatophyta</taxon>
        <taxon>Magnoliopsida</taxon>
        <taxon>eudicotyledons</taxon>
        <taxon>Gunneridae</taxon>
        <taxon>Pentapetalae</taxon>
        <taxon>rosids</taxon>
        <taxon>malvids</taxon>
        <taxon>Brassicales</taxon>
        <taxon>Brassicaceae</taxon>
        <taxon>Camelineae</taxon>
        <taxon>Arabidopsis</taxon>
    </lineage>
</organism>
<proteinExistence type="evidence at transcript level"/>
<dbReference type="EMBL" id="AB026658">
    <property type="protein sequence ID" value="BAB01111.1"/>
    <property type="molecule type" value="Genomic_DNA"/>
</dbReference>
<dbReference type="EMBL" id="CP002686">
    <property type="protein sequence ID" value="AEE76099.1"/>
    <property type="molecule type" value="Genomic_DNA"/>
</dbReference>
<dbReference type="EMBL" id="BT010855">
    <property type="protein sequence ID" value="AAR24222.1"/>
    <property type="molecule type" value="mRNA"/>
</dbReference>
<dbReference type="EMBL" id="BT011321">
    <property type="protein sequence ID" value="AAR92357.1"/>
    <property type="molecule type" value="mRNA"/>
</dbReference>
<dbReference type="RefSeq" id="NP_188474.1">
    <property type="nucleotide sequence ID" value="NM_112730.4"/>
</dbReference>
<dbReference type="BioGRID" id="6707">
    <property type="interactions" value="5"/>
</dbReference>
<dbReference type="FunCoup" id="Q9LS45">
    <property type="interactions" value="25"/>
</dbReference>
<dbReference type="IntAct" id="Q9LS45">
    <property type="interactions" value="5"/>
</dbReference>
<dbReference type="STRING" id="3702.Q9LS45"/>
<dbReference type="iPTMnet" id="Q9LS45"/>
<dbReference type="PaxDb" id="3702-AT3G18450.1"/>
<dbReference type="EnsemblPlants" id="AT3G18450.1">
    <property type="protein sequence ID" value="AT3G18450.1"/>
    <property type="gene ID" value="AT3G18450"/>
</dbReference>
<dbReference type="GeneID" id="821374"/>
<dbReference type="Gramene" id="AT3G18450.1">
    <property type="protein sequence ID" value="AT3G18450.1"/>
    <property type="gene ID" value="AT3G18450"/>
</dbReference>
<dbReference type="KEGG" id="ath:AT3G18450"/>
<dbReference type="Araport" id="AT3G18450"/>
<dbReference type="TAIR" id="AT3G18450"/>
<dbReference type="eggNOG" id="ENOG502RXFT">
    <property type="taxonomic scope" value="Eukaryota"/>
</dbReference>
<dbReference type="HOGENOM" id="CLU_083147_1_1_1"/>
<dbReference type="InParanoid" id="Q9LS45"/>
<dbReference type="OMA" id="WITHLVC"/>
<dbReference type="PhylomeDB" id="Q9LS45"/>
<dbReference type="PRO" id="PR:Q9LS45"/>
<dbReference type="Proteomes" id="UP000006548">
    <property type="component" value="Chromosome 3"/>
</dbReference>
<dbReference type="ExpressionAtlas" id="Q9LS45">
    <property type="expression patterns" value="baseline and differential"/>
</dbReference>
<dbReference type="GO" id="GO:0016020">
    <property type="term" value="C:membrane"/>
    <property type="evidence" value="ECO:0007669"/>
    <property type="project" value="UniProtKB-SubCell"/>
</dbReference>
<dbReference type="InterPro" id="IPR006461">
    <property type="entry name" value="PLAC_motif_containing"/>
</dbReference>
<dbReference type="NCBIfam" id="TIGR01571">
    <property type="entry name" value="A_thal_Cys_rich"/>
    <property type="match status" value="1"/>
</dbReference>
<dbReference type="PANTHER" id="PTHR15907">
    <property type="entry name" value="DUF614 FAMILY PROTEIN-RELATED"/>
    <property type="match status" value="1"/>
</dbReference>
<dbReference type="Pfam" id="PF04749">
    <property type="entry name" value="PLAC8"/>
    <property type="match status" value="1"/>
</dbReference>
<gene>
    <name type="primary">PCR5</name>
    <name type="ordered locus">At3g18450</name>
    <name type="ORF">MYF24.17</name>
</gene>
<evidence type="ECO:0000250" key="1"/>
<evidence type="ECO:0000255" key="2"/>
<evidence type="ECO:0000256" key="3">
    <source>
        <dbReference type="SAM" id="MobiDB-lite"/>
    </source>
</evidence>
<evidence type="ECO:0000305" key="4"/>
<accession>Q9LS45</accession>
<protein>
    <recommendedName>
        <fullName>Protein PLANT CADMIUM RESISTANCE 5</fullName>
        <shortName>AtPCR5</shortName>
    </recommendedName>
</protein>
<keyword id="KW-0472">Membrane</keyword>
<keyword id="KW-1185">Reference proteome</keyword>
<keyword id="KW-0812">Transmembrane</keyword>
<keyword id="KW-1133">Transmembrane helix</keyword>
<sequence>MGRPVGQTNQAQPSVQHTASPSNKVSHNGGIGKPANIPTGIPVNYQQTQNQWSSQLFDCMNDSENAVITLIAPCVTFGQIAEIVDEGATPCATAGLLYGALFFTGASFVYSYMFRARIRKKFGLPDAPAPDWITHLVCMPFALCQEYRELKHHGFDPILGWAGNVQQAQQQEMMTPPTGQRMMG</sequence>
<comment type="function">
    <text evidence="1">May be involved in heavy metals transport.</text>
</comment>
<comment type="subcellular location">
    <subcellularLocation>
        <location evidence="4">Membrane</location>
        <topology evidence="4">Single-pass membrane protein</topology>
    </subcellularLocation>
</comment>
<comment type="similarity">
    <text evidence="4">Belongs to the cornifelin family.</text>
</comment>